<feature type="chain" id="PRO_1000004436" description="UDP-N-acetylmuramate--L-alanine ligase">
    <location>
        <begin position="1"/>
        <end position="491"/>
    </location>
</feature>
<feature type="binding site" evidence="1">
    <location>
        <begin position="126"/>
        <end position="132"/>
    </location>
    <ligand>
        <name>ATP</name>
        <dbReference type="ChEBI" id="CHEBI:30616"/>
    </ligand>
</feature>
<keyword id="KW-0067">ATP-binding</keyword>
<keyword id="KW-0131">Cell cycle</keyword>
<keyword id="KW-0132">Cell division</keyword>
<keyword id="KW-0133">Cell shape</keyword>
<keyword id="KW-0961">Cell wall biogenesis/degradation</keyword>
<keyword id="KW-0963">Cytoplasm</keyword>
<keyword id="KW-0436">Ligase</keyword>
<keyword id="KW-0547">Nucleotide-binding</keyword>
<keyword id="KW-0573">Peptidoglycan synthesis</keyword>
<evidence type="ECO:0000255" key="1">
    <source>
        <dbReference type="HAMAP-Rule" id="MF_00046"/>
    </source>
</evidence>
<accession>A1JJJ4</accession>
<proteinExistence type="inferred from homology"/>
<sequence length="491" mass="53492">MNTQQLAKLRTIVPEMRRVRHIHFVGIGGAGMGGIAEVLANEGYQISGSDLAPNPVTQHLTSLGAQIYFHHRPENVLDASVVVVSTAISADNPEIVAAREARIPVIRRAEMLAELMRFRHGIAVAGTHGKTTTTAMVSSIYAEAGLDPTFVNGGLVKAAGTHARLGSSRYLIAEADESDASFLHLQPMVAIVTNIEADHMDTYQGDFENLKQTFINFLHNLPFYGRAVMCIDDPVVRELLPRVGRHITTYGFSDDADVQIASYRQEGPQGHFTLKRLDKPLMTVTLNAPGRHNALNAAAAVAVATEEGIEDNDILRALAGFQGTGRRFDFLGNFPLAPVNGKEGSAMLVDDYGHHPTEVDATIKAARAGWPDKRIVMVFQPHRYTRTRDLYDDFANVLSQVDVLLMLDVYAAGEPPIPGADSRSLCRTIRNRGKLDPILVSDSETVPEVLAQVLNGDDLILVQGAGNIGKIARKLAELKLQPQTKDEEHHG</sequence>
<gene>
    <name evidence="1" type="primary">murC</name>
    <name type="ordered locus">YE0673</name>
</gene>
<organism>
    <name type="scientific">Yersinia enterocolitica serotype O:8 / biotype 1B (strain NCTC 13174 / 8081)</name>
    <dbReference type="NCBI Taxonomy" id="393305"/>
    <lineage>
        <taxon>Bacteria</taxon>
        <taxon>Pseudomonadati</taxon>
        <taxon>Pseudomonadota</taxon>
        <taxon>Gammaproteobacteria</taxon>
        <taxon>Enterobacterales</taxon>
        <taxon>Yersiniaceae</taxon>
        <taxon>Yersinia</taxon>
    </lineage>
</organism>
<reference key="1">
    <citation type="journal article" date="2006" name="PLoS Genet.">
        <title>The complete genome sequence and comparative genome analysis of the high pathogenicity Yersinia enterocolitica strain 8081.</title>
        <authorList>
            <person name="Thomson N.R."/>
            <person name="Howard S."/>
            <person name="Wren B.W."/>
            <person name="Holden M.T.G."/>
            <person name="Crossman L."/>
            <person name="Challis G.L."/>
            <person name="Churcher C."/>
            <person name="Mungall K."/>
            <person name="Brooks K."/>
            <person name="Chillingworth T."/>
            <person name="Feltwell T."/>
            <person name="Abdellah Z."/>
            <person name="Hauser H."/>
            <person name="Jagels K."/>
            <person name="Maddison M."/>
            <person name="Moule S."/>
            <person name="Sanders M."/>
            <person name="Whitehead S."/>
            <person name="Quail M.A."/>
            <person name="Dougan G."/>
            <person name="Parkhill J."/>
            <person name="Prentice M.B."/>
        </authorList>
    </citation>
    <scope>NUCLEOTIDE SEQUENCE [LARGE SCALE GENOMIC DNA]</scope>
    <source>
        <strain>NCTC 13174 / 8081</strain>
    </source>
</reference>
<dbReference type="EC" id="6.3.2.8" evidence="1"/>
<dbReference type="EMBL" id="AM286415">
    <property type="protein sequence ID" value="CAL10782.1"/>
    <property type="molecule type" value="Genomic_DNA"/>
</dbReference>
<dbReference type="RefSeq" id="WP_011815569.1">
    <property type="nucleotide sequence ID" value="NC_008800.1"/>
</dbReference>
<dbReference type="RefSeq" id="YP_001005022.1">
    <property type="nucleotide sequence ID" value="NC_008800.1"/>
</dbReference>
<dbReference type="SMR" id="A1JJJ4"/>
<dbReference type="KEGG" id="yen:YE0673"/>
<dbReference type="PATRIC" id="fig|393305.7.peg.768"/>
<dbReference type="eggNOG" id="COG0773">
    <property type="taxonomic scope" value="Bacteria"/>
</dbReference>
<dbReference type="HOGENOM" id="CLU_028104_2_2_6"/>
<dbReference type="OrthoDB" id="9804126at2"/>
<dbReference type="UniPathway" id="UPA00219"/>
<dbReference type="Proteomes" id="UP000000642">
    <property type="component" value="Chromosome"/>
</dbReference>
<dbReference type="GO" id="GO:0005737">
    <property type="term" value="C:cytoplasm"/>
    <property type="evidence" value="ECO:0007669"/>
    <property type="project" value="UniProtKB-SubCell"/>
</dbReference>
<dbReference type="GO" id="GO:0005524">
    <property type="term" value="F:ATP binding"/>
    <property type="evidence" value="ECO:0007669"/>
    <property type="project" value="UniProtKB-UniRule"/>
</dbReference>
<dbReference type="GO" id="GO:0008763">
    <property type="term" value="F:UDP-N-acetylmuramate-L-alanine ligase activity"/>
    <property type="evidence" value="ECO:0007669"/>
    <property type="project" value="UniProtKB-UniRule"/>
</dbReference>
<dbReference type="GO" id="GO:0051301">
    <property type="term" value="P:cell division"/>
    <property type="evidence" value="ECO:0007669"/>
    <property type="project" value="UniProtKB-KW"/>
</dbReference>
<dbReference type="GO" id="GO:0071555">
    <property type="term" value="P:cell wall organization"/>
    <property type="evidence" value="ECO:0007669"/>
    <property type="project" value="UniProtKB-KW"/>
</dbReference>
<dbReference type="GO" id="GO:0009252">
    <property type="term" value="P:peptidoglycan biosynthetic process"/>
    <property type="evidence" value="ECO:0007669"/>
    <property type="project" value="UniProtKB-UniRule"/>
</dbReference>
<dbReference type="GO" id="GO:0008360">
    <property type="term" value="P:regulation of cell shape"/>
    <property type="evidence" value="ECO:0007669"/>
    <property type="project" value="UniProtKB-KW"/>
</dbReference>
<dbReference type="FunFam" id="3.40.1190.10:FF:000001">
    <property type="entry name" value="UDP-N-acetylmuramate--L-alanine ligase"/>
    <property type="match status" value="1"/>
</dbReference>
<dbReference type="FunFam" id="3.40.50.720:FF:000046">
    <property type="entry name" value="UDP-N-acetylmuramate--L-alanine ligase"/>
    <property type="match status" value="1"/>
</dbReference>
<dbReference type="FunFam" id="3.90.190.20:FF:000001">
    <property type="entry name" value="UDP-N-acetylmuramate--L-alanine ligase"/>
    <property type="match status" value="1"/>
</dbReference>
<dbReference type="Gene3D" id="3.90.190.20">
    <property type="entry name" value="Mur ligase, C-terminal domain"/>
    <property type="match status" value="1"/>
</dbReference>
<dbReference type="Gene3D" id="3.40.1190.10">
    <property type="entry name" value="Mur-like, catalytic domain"/>
    <property type="match status" value="1"/>
</dbReference>
<dbReference type="Gene3D" id="3.40.50.720">
    <property type="entry name" value="NAD(P)-binding Rossmann-like Domain"/>
    <property type="match status" value="1"/>
</dbReference>
<dbReference type="HAMAP" id="MF_00046">
    <property type="entry name" value="MurC"/>
    <property type="match status" value="1"/>
</dbReference>
<dbReference type="InterPro" id="IPR036565">
    <property type="entry name" value="Mur-like_cat_sf"/>
</dbReference>
<dbReference type="InterPro" id="IPR004101">
    <property type="entry name" value="Mur_ligase_C"/>
</dbReference>
<dbReference type="InterPro" id="IPR036615">
    <property type="entry name" value="Mur_ligase_C_dom_sf"/>
</dbReference>
<dbReference type="InterPro" id="IPR013221">
    <property type="entry name" value="Mur_ligase_cen"/>
</dbReference>
<dbReference type="InterPro" id="IPR000713">
    <property type="entry name" value="Mur_ligase_N"/>
</dbReference>
<dbReference type="InterPro" id="IPR050061">
    <property type="entry name" value="MurCDEF_pg_biosynth"/>
</dbReference>
<dbReference type="InterPro" id="IPR005758">
    <property type="entry name" value="UDP-N-AcMur_Ala_ligase_MurC"/>
</dbReference>
<dbReference type="NCBIfam" id="TIGR01082">
    <property type="entry name" value="murC"/>
    <property type="match status" value="1"/>
</dbReference>
<dbReference type="PANTHER" id="PTHR43445:SF3">
    <property type="entry name" value="UDP-N-ACETYLMURAMATE--L-ALANINE LIGASE"/>
    <property type="match status" value="1"/>
</dbReference>
<dbReference type="PANTHER" id="PTHR43445">
    <property type="entry name" value="UDP-N-ACETYLMURAMATE--L-ALANINE LIGASE-RELATED"/>
    <property type="match status" value="1"/>
</dbReference>
<dbReference type="Pfam" id="PF01225">
    <property type="entry name" value="Mur_ligase"/>
    <property type="match status" value="1"/>
</dbReference>
<dbReference type="Pfam" id="PF02875">
    <property type="entry name" value="Mur_ligase_C"/>
    <property type="match status" value="1"/>
</dbReference>
<dbReference type="Pfam" id="PF08245">
    <property type="entry name" value="Mur_ligase_M"/>
    <property type="match status" value="1"/>
</dbReference>
<dbReference type="SUPFAM" id="SSF51984">
    <property type="entry name" value="MurCD N-terminal domain"/>
    <property type="match status" value="1"/>
</dbReference>
<dbReference type="SUPFAM" id="SSF53623">
    <property type="entry name" value="MurD-like peptide ligases, catalytic domain"/>
    <property type="match status" value="1"/>
</dbReference>
<dbReference type="SUPFAM" id="SSF53244">
    <property type="entry name" value="MurD-like peptide ligases, peptide-binding domain"/>
    <property type="match status" value="1"/>
</dbReference>
<name>MURC_YERE8</name>
<protein>
    <recommendedName>
        <fullName evidence="1">UDP-N-acetylmuramate--L-alanine ligase</fullName>
        <ecNumber evidence="1">6.3.2.8</ecNumber>
    </recommendedName>
    <alternativeName>
        <fullName evidence="1">UDP-N-acetylmuramoyl-L-alanine synthetase</fullName>
    </alternativeName>
</protein>
<comment type="function">
    <text evidence="1">Cell wall formation.</text>
</comment>
<comment type="catalytic activity">
    <reaction evidence="1">
        <text>UDP-N-acetyl-alpha-D-muramate + L-alanine + ATP = UDP-N-acetyl-alpha-D-muramoyl-L-alanine + ADP + phosphate + H(+)</text>
        <dbReference type="Rhea" id="RHEA:23372"/>
        <dbReference type="ChEBI" id="CHEBI:15378"/>
        <dbReference type="ChEBI" id="CHEBI:30616"/>
        <dbReference type="ChEBI" id="CHEBI:43474"/>
        <dbReference type="ChEBI" id="CHEBI:57972"/>
        <dbReference type="ChEBI" id="CHEBI:70757"/>
        <dbReference type="ChEBI" id="CHEBI:83898"/>
        <dbReference type="ChEBI" id="CHEBI:456216"/>
        <dbReference type="EC" id="6.3.2.8"/>
    </reaction>
</comment>
<comment type="pathway">
    <text evidence="1">Cell wall biogenesis; peptidoglycan biosynthesis.</text>
</comment>
<comment type="subcellular location">
    <subcellularLocation>
        <location evidence="1">Cytoplasm</location>
    </subcellularLocation>
</comment>
<comment type="similarity">
    <text evidence="1">Belongs to the MurCDEF family.</text>
</comment>